<proteinExistence type="inferred from homology"/>
<accession>Q70XH7</accession>
<reference key="1">
    <citation type="journal article" date="2004" name="Gene">
        <title>Marsupial relationships and a timeline for marsupial radiation in South Gondwana.</title>
        <authorList>
            <person name="Nilsson M.A."/>
            <person name="Arnason U."/>
            <person name="Spencer P.B.S."/>
            <person name="Janke A."/>
        </authorList>
    </citation>
    <scope>NUCLEOTIDE SEQUENCE [GENOMIC DNA]</scope>
</reference>
<sequence>MASIYLNLMMAFLLALSGVLIYRSHLMSTLLCLEGMMLSLFIMMTLTISHFQMFSLSMAPLILLVFSACEAGIGLALLVKTSNAHGNDHVQNLNLLQC</sequence>
<gene>
    <name type="primary">MT-ND4L</name>
    <name type="synonym">MTND4L</name>
    <name type="synonym">NADH4L</name>
    <name type="synonym">ND4L</name>
</gene>
<feature type="chain" id="PRO_0000274983" description="NADH-ubiquinone oxidoreductase chain 4L">
    <location>
        <begin position="1"/>
        <end position="98"/>
    </location>
</feature>
<feature type="transmembrane region" description="Helical" evidence="3">
    <location>
        <begin position="1"/>
        <end position="21"/>
    </location>
</feature>
<feature type="transmembrane region" description="Helical" evidence="3">
    <location>
        <begin position="26"/>
        <end position="46"/>
    </location>
</feature>
<feature type="transmembrane region" description="Helical" evidence="3">
    <location>
        <begin position="59"/>
        <end position="79"/>
    </location>
</feature>
<organism>
    <name type="scientific">Caenolestes fuliginosus</name>
    <name type="common">Shrew opossum</name>
    <dbReference type="NCBI Taxonomy" id="37696"/>
    <lineage>
        <taxon>Eukaryota</taxon>
        <taxon>Metazoa</taxon>
        <taxon>Chordata</taxon>
        <taxon>Craniata</taxon>
        <taxon>Vertebrata</taxon>
        <taxon>Euteleostomi</taxon>
        <taxon>Mammalia</taxon>
        <taxon>Metatheria</taxon>
        <taxon>Paucituberculata</taxon>
        <taxon>Caenolestidae</taxon>
        <taxon>Caenolestes</taxon>
    </lineage>
</organism>
<evidence type="ECO:0000250" key="1">
    <source>
        <dbReference type="UniProtKB" id="P03901"/>
    </source>
</evidence>
<evidence type="ECO:0000250" key="2">
    <source>
        <dbReference type="UniProtKB" id="P03902"/>
    </source>
</evidence>
<evidence type="ECO:0000255" key="3"/>
<evidence type="ECO:0000305" key="4"/>
<name>NU4LM_CAEFU</name>
<geneLocation type="mitochondrion"/>
<comment type="function">
    <text evidence="1">Core subunit of the mitochondrial membrane respiratory chain NADH dehydrogenase (Complex I) which catalyzes electron transfer from NADH through the respiratory chain, using ubiquinone as an electron acceptor. Part of the enzyme membrane arm which is embedded in the lipid bilayer and involved in proton translocation.</text>
</comment>
<comment type="catalytic activity">
    <reaction evidence="1">
        <text>a ubiquinone + NADH + 5 H(+)(in) = a ubiquinol + NAD(+) + 4 H(+)(out)</text>
        <dbReference type="Rhea" id="RHEA:29091"/>
        <dbReference type="Rhea" id="RHEA-COMP:9565"/>
        <dbReference type="Rhea" id="RHEA-COMP:9566"/>
        <dbReference type="ChEBI" id="CHEBI:15378"/>
        <dbReference type="ChEBI" id="CHEBI:16389"/>
        <dbReference type="ChEBI" id="CHEBI:17976"/>
        <dbReference type="ChEBI" id="CHEBI:57540"/>
        <dbReference type="ChEBI" id="CHEBI:57945"/>
        <dbReference type="EC" id="7.1.1.2"/>
    </reaction>
    <physiologicalReaction direction="left-to-right" evidence="1">
        <dbReference type="Rhea" id="RHEA:29092"/>
    </physiologicalReaction>
</comment>
<comment type="subunit">
    <text evidence="2">Core subunit of respiratory chain NADH dehydrogenase (Complex I) which is composed of 45 different subunits.</text>
</comment>
<comment type="subcellular location">
    <subcellularLocation>
        <location evidence="2">Mitochondrion inner membrane</location>
        <topology evidence="3">Multi-pass membrane protein</topology>
    </subcellularLocation>
</comment>
<comment type="similarity">
    <text evidence="4">Belongs to the complex I subunit 4L family.</text>
</comment>
<keyword id="KW-0249">Electron transport</keyword>
<keyword id="KW-0472">Membrane</keyword>
<keyword id="KW-0496">Mitochondrion</keyword>
<keyword id="KW-0999">Mitochondrion inner membrane</keyword>
<keyword id="KW-0520">NAD</keyword>
<keyword id="KW-0679">Respiratory chain</keyword>
<keyword id="KW-1278">Translocase</keyword>
<keyword id="KW-0812">Transmembrane</keyword>
<keyword id="KW-1133">Transmembrane helix</keyword>
<keyword id="KW-0813">Transport</keyword>
<keyword id="KW-0830">Ubiquinone</keyword>
<dbReference type="EC" id="7.1.1.2"/>
<dbReference type="EMBL" id="AJ508400">
    <property type="protein sequence ID" value="CAD48234.1"/>
    <property type="molecule type" value="Genomic_DNA"/>
</dbReference>
<dbReference type="RefSeq" id="YP_003708.1">
    <property type="nucleotide sequence ID" value="NC_005828.1"/>
</dbReference>
<dbReference type="SMR" id="Q70XH7"/>
<dbReference type="GeneID" id="2773071"/>
<dbReference type="CTD" id="4539"/>
<dbReference type="GO" id="GO:0005743">
    <property type="term" value="C:mitochondrial inner membrane"/>
    <property type="evidence" value="ECO:0000250"/>
    <property type="project" value="UniProtKB"/>
</dbReference>
<dbReference type="GO" id="GO:0045271">
    <property type="term" value="C:respiratory chain complex I"/>
    <property type="evidence" value="ECO:0000250"/>
    <property type="project" value="UniProtKB"/>
</dbReference>
<dbReference type="GO" id="GO:0008137">
    <property type="term" value="F:NADH dehydrogenase (ubiquinone) activity"/>
    <property type="evidence" value="ECO:0000250"/>
    <property type="project" value="UniProtKB"/>
</dbReference>
<dbReference type="GO" id="GO:0042773">
    <property type="term" value="P:ATP synthesis coupled electron transport"/>
    <property type="evidence" value="ECO:0007669"/>
    <property type="project" value="InterPro"/>
</dbReference>
<dbReference type="FunFam" id="1.10.287.3510:FF:000002">
    <property type="entry name" value="NADH-ubiquinone oxidoreductase chain 4L"/>
    <property type="match status" value="1"/>
</dbReference>
<dbReference type="Gene3D" id="1.10.287.3510">
    <property type="match status" value="1"/>
</dbReference>
<dbReference type="InterPro" id="IPR001133">
    <property type="entry name" value="NADH_UbQ_OxRdtase_chain4L/K"/>
</dbReference>
<dbReference type="InterPro" id="IPR039428">
    <property type="entry name" value="NUOK/Mnh_C1-like"/>
</dbReference>
<dbReference type="PANTHER" id="PTHR11434:SF0">
    <property type="entry name" value="NADH-UBIQUINONE OXIDOREDUCTASE CHAIN 4L"/>
    <property type="match status" value="1"/>
</dbReference>
<dbReference type="PANTHER" id="PTHR11434">
    <property type="entry name" value="NADH-UBIQUINONE OXIDOREDUCTASE SUBUNIT ND4L"/>
    <property type="match status" value="1"/>
</dbReference>
<dbReference type="Pfam" id="PF00420">
    <property type="entry name" value="Oxidored_q2"/>
    <property type="match status" value="1"/>
</dbReference>
<protein>
    <recommendedName>
        <fullName>NADH-ubiquinone oxidoreductase chain 4L</fullName>
        <ecNumber>7.1.1.2</ecNumber>
    </recommendedName>
    <alternativeName>
        <fullName>NADH dehydrogenase subunit 4L</fullName>
    </alternativeName>
</protein>